<reference key="1">
    <citation type="submission" date="1999-04" db="EMBL/GenBank/DDBJ databases">
        <title>Emericella nidulans putative branching enzyme.</title>
        <authorList>
            <person name="Kobayashi T."/>
            <person name="Tanaka A."/>
            <person name="Matsuno A."/>
            <person name="Kato M."/>
            <person name="Tsukagoshi N."/>
        </authorList>
    </citation>
    <scope>NUCLEOTIDE SEQUENCE [GENOMIC DNA]</scope>
</reference>
<reference key="2">
    <citation type="journal article" date="2005" name="Nature">
        <title>Sequencing of Aspergillus nidulans and comparative analysis with A. fumigatus and A. oryzae.</title>
        <authorList>
            <person name="Galagan J.E."/>
            <person name="Calvo S.E."/>
            <person name="Cuomo C."/>
            <person name="Ma L.-J."/>
            <person name="Wortman J.R."/>
            <person name="Batzoglou S."/>
            <person name="Lee S.-I."/>
            <person name="Bastuerkmen M."/>
            <person name="Spevak C.C."/>
            <person name="Clutterbuck J."/>
            <person name="Kapitonov V."/>
            <person name="Jurka J."/>
            <person name="Scazzocchio C."/>
            <person name="Farman M.L."/>
            <person name="Butler J."/>
            <person name="Purcell S."/>
            <person name="Harris S."/>
            <person name="Braus G.H."/>
            <person name="Draht O."/>
            <person name="Busch S."/>
            <person name="D'Enfert C."/>
            <person name="Bouchier C."/>
            <person name="Goldman G.H."/>
            <person name="Bell-Pedersen D."/>
            <person name="Griffiths-Jones S."/>
            <person name="Doonan J.H."/>
            <person name="Yu J."/>
            <person name="Vienken K."/>
            <person name="Pain A."/>
            <person name="Freitag M."/>
            <person name="Selker E.U."/>
            <person name="Archer D.B."/>
            <person name="Penalva M.A."/>
            <person name="Oakley B.R."/>
            <person name="Momany M."/>
            <person name="Tanaka T."/>
            <person name="Kumagai T."/>
            <person name="Asai K."/>
            <person name="Machida M."/>
            <person name="Nierman W.C."/>
            <person name="Denning D.W."/>
            <person name="Caddick M.X."/>
            <person name="Hynes M."/>
            <person name="Paoletti M."/>
            <person name="Fischer R."/>
            <person name="Miller B.L."/>
            <person name="Dyer P.S."/>
            <person name="Sachs M.S."/>
            <person name="Osmani S.A."/>
            <person name="Birren B.W."/>
        </authorList>
    </citation>
    <scope>NUCLEOTIDE SEQUENCE [LARGE SCALE GENOMIC DNA]</scope>
    <source>
        <strain>FGSC A4 / ATCC 38163 / CBS 112.46 / NRRL 194 / M139</strain>
    </source>
</reference>
<reference key="3">
    <citation type="journal article" date="2009" name="Fungal Genet. Biol.">
        <title>The 2008 update of the Aspergillus nidulans genome annotation: a community effort.</title>
        <authorList>
            <person name="Wortman J.R."/>
            <person name="Gilsenan J.M."/>
            <person name="Joardar V."/>
            <person name="Deegan J."/>
            <person name="Clutterbuck J."/>
            <person name="Andersen M.R."/>
            <person name="Archer D."/>
            <person name="Bencina M."/>
            <person name="Braus G."/>
            <person name="Coutinho P."/>
            <person name="von Dohren H."/>
            <person name="Doonan J."/>
            <person name="Driessen A.J."/>
            <person name="Durek P."/>
            <person name="Espeso E."/>
            <person name="Fekete E."/>
            <person name="Flipphi M."/>
            <person name="Estrada C.G."/>
            <person name="Geysens S."/>
            <person name="Goldman G."/>
            <person name="de Groot P.W."/>
            <person name="Hansen K."/>
            <person name="Harris S.D."/>
            <person name="Heinekamp T."/>
            <person name="Helmstaedt K."/>
            <person name="Henrissat B."/>
            <person name="Hofmann G."/>
            <person name="Homan T."/>
            <person name="Horio T."/>
            <person name="Horiuchi H."/>
            <person name="James S."/>
            <person name="Jones M."/>
            <person name="Karaffa L."/>
            <person name="Karanyi Z."/>
            <person name="Kato M."/>
            <person name="Keller N."/>
            <person name="Kelly D.E."/>
            <person name="Kiel J.A."/>
            <person name="Kim J.M."/>
            <person name="van der Klei I.J."/>
            <person name="Klis F.M."/>
            <person name="Kovalchuk A."/>
            <person name="Krasevec N."/>
            <person name="Kubicek C.P."/>
            <person name="Liu B."/>
            <person name="Maccabe A."/>
            <person name="Meyer V."/>
            <person name="Mirabito P."/>
            <person name="Miskei M."/>
            <person name="Mos M."/>
            <person name="Mullins J."/>
            <person name="Nelson D.R."/>
            <person name="Nielsen J."/>
            <person name="Oakley B.R."/>
            <person name="Osmani S.A."/>
            <person name="Pakula T."/>
            <person name="Paszewski A."/>
            <person name="Paulsen I."/>
            <person name="Pilsyk S."/>
            <person name="Pocsi I."/>
            <person name="Punt P.J."/>
            <person name="Ram A.F."/>
            <person name="Ren Q."/>
            <person name="Robellet X."/>
            <person name="Robson G."/>
            <person name="Seiboth B."/>
            <person name="van Solingen P."/>
            <person name="Specht T."/>
            <person name="Sun J."/>
            <person name="Taheri-Talesh N."/>
            <person name="Takeshita N."/>
            <person name="Ussery D."/>
            <person name="vanKuyk P.A."/>
            <person name="Visser H."/>
            <person name="van de Vondervoort P.J."/>
            <person name="de Vries R.P."/>
            <person name="Walton J."/>
            <person name="Xiang X."/>
            <person name="Xiong Y."/>
            <person name="Zeng A.P."/>
            <person name="Brandt B.W."/>
            <person name="Cornell M.J."/>
            <person name="van den Hondel C.A."/>
            <person name="Visser J."/>
            <person name="Oliver S.G."/>
            <person name="Turner G."/>
        </authorList>
    </citation>
    <scope>GENOME REANNOTATION</scope>
    <source>
        <strain>FGSC A4 / ATCC 38163 / CBS 112.46 / NRRL 194 / M139</strain>
    </source>
</reference>
<protein>
    <recommendedName>
        <fullName>1,4-alpha-glucan-branching enzyme</fullName>
        <ecNumber evidence="2">2.4.1.18</ecNumber>
    </recommendedName>
    <alternativeName>
        <fullName>Glycogen-branching enzyme</fullName>
    </alternativeName>
</protein>
<comment type="function">
    <text evidence="2">Glycogen-branching enzyme participates in the glycogen biosynthetic process along with glycogenin and glycogen synthase. Generates alpha-1,6-glucosidic branches from alpha-1,4-linked glucose chains, to increase solubility of the glycogen polymer.</text>
</comment>
<comment type="catalytic activity">
    <reaction evidence="2">
        <text>Transfers a segment of a (1-&gt;4)-alpha-D-glucan chain to a primary hydroxy group in a similar glucan chain.</text>
        <dbReference type="EC" id="2.4.1.18"/>
    </reaction>
</comment>
<comment type="pathway">
    <text evidence="2">Glycan biosynthesis; glycogen biosynthesis.</text>
</comment>
<comment type="subcellular location">
    <subcellularLocation>
        <location evidence="1">Cytoplasm</location>
    </subcellularLocation>
    <text evidence="1">Localizes to glycogen granules in the cytoplasm.</text>
</comment>
<comment type="similarity">
    <text evidence="4">Belongs to the glycosyl hydrolase 13 family. GlgB subfamily.</text>
</comment>
<comment type="sequence caution" evidence="4">
    <conflict type="miscellaneous discrepancy">
        <sequence resource="EMBL-CDS" id="BAA78714"/>
    </conflict>
    <text>Probable sequencing error places a 'ESWIKTV' sequence at a wrong position.</text>
</comment>
<comment type="sequence caution" evidence="4">
    <conflict type="erroneous gene model prediction">
        <sequence resource="EMBL-CDS" id="EAA64425"/>
    </conflict>
</comment>
<sequence>MTSTAPSDGTGIIDLDPWLEPFREAIKRRFDYVESWIKTVDEVEGGLDKFSKGYEKFGFNVSETGDITYREWAPNAIEAALVGDFNNWDTKANPMTRDNFGVWEIALPAKNGTPVIPHDSKVKITMVTRSGERIYRIPAWIKRVVQDLNVSPIYESVFWNPPKAERYNFQHARPKKPESLRIYEAHVGISSPDTRVATYKEFTANMLPRIKYLGYNAIQLMAIMEHAYYASFGYQVNNFFAASSRYGKPEDLKELVDTAHSMGLVVLLDVVHSHASKNVDDGLNMFDGSDHLYFHSGSKGQHELWDSRLFNYGNHEVLRFLLSNLRFWMEEYGFDGFRFDGVTSMLYTHHGIGTGFSGGYHEYFGPAVDDDGVMYLALANEMLHRLYPDCITVAEDVSGMPALCLPHGLGGVGFDYRLAMAIPDMYIKLLKEKSDNDWDIGNLAFTLTNRRHGEKTIAYAESHDQALVGDKSLMMWLCDKEMYTHMSVLTEFTPVIERGMALHKMIRLVTHALGGEGYLNFEGNEFGHPEWLDFPRAGNNNSFWYARRQLNLTEDHLLRYRFLNEFDRAMQLTESKYGWLHAPQAYISLKHEGDKVLVFERADLLWIFNFHPTESFTDYRVGVEQAGTYRVVLDTDDQAFGGLGRIDQGTRFFTTDMEWNGRRNYLQVYIPTRTALALALEETL</sequence>
<feature type="chain" id="PRO_0000188782" description="1,4-alpha-glucan-branching enzyme">
    <location>
        <begin position="1"/>
        <end position="684"/>
    </location>
</feature>
<feature type="active site" description="Nucleophile" evidence="2">
    <location>
        <position position="340"/>
    </location>
</feature>
<feature type="active site" description="Proton donor" evidence="2">
    <location>
        <position position="395"/>
    </location>
</feature>
<feature type="binding site" evidence="3">
    <location>
        <position position="88"/>
    </location>
    <ligand>
        <name>(1,4-alpha-D-glucosyl)n</name>
        <dbReference type="ChEBI" id="CHEBI:15444"/>
    </ligand>
</feature>
<feature type="binding site" evidence="3">
    <location>
        <position position="123"/>
    </location>
    <ligand>
        <name>(1,4-alpha-D-glucosyl)n</name>
        <dbReference type="ChEBI" id="CHEBI:15444"/>
    </ligand>
</feature>
<feature type="site" description="Transition state stabilizer" evidence="2">
    <location>
        <position position="464"/>
    </location>
</feature>
<feature type="sequence conflict" description="In Ref. 1; BAA78714." evidence="4" ref="1">
    <location>
        <begin position="34"/>
        <end position="40"/>
    </location>
</feature>
<feature type="sequence conflict" description="In Ref. 1; BAA78714." evidence="4" ref="1">
    <original>N</original>
    <variation>NESWIKTV</variation>
    <location>
        <position position="60"/>
    </location>
</feature>
<feature type="sequence conflict" description="In Ref. 1; BAA78714." evidence="4" ref="1">
    <original>K</original>
    <variation>KVK</variation>
    <location>
        <position position="123"/>
    </location>
</feature>
<keyword id="KW-0963">Cytoplasm</keyword>
<keyword id="KW-0320">Glycogen biosynthesis</keyword>
<keyword id="KW-0328">Glycosyltransferase</keyword>
<keyword id="KW-1185">Reference proteome</keyword>
<keyword id="KW-0808">Transferase</keyword>
<proteinExistence type="evidence at transcript level"/>
<gene>
    <name type="primary">be1</name>
    <name type="ORF">AN2314</name>
</gene>
<name>GLGB_EMENI</name>
<accession>Q9Y8H3</accession>
<accession>C8VN63</accession>
<accession>Q5BAW6</accession>
<organism>
    <name type="scientific">Emericella nidulans (strain FGSC A4 / ATCC 38163 / CBS 112.46 / NRRL 194 / M139)</name>
    <name type="common">Aspergillus nidulans</name>
    <dbReference type="NCBI Taxonomy" id="227321"/>
    <lineage>
        <taxon>Eukaryota</taxon>
        <taxon>Fungi</taxon>
        <taxon>Dikarya</taxon>
        <taxon>Ascomycota</taxon>
        <taxon>Pezizomycotina</taxon>
        <taxon>Eurotiomycetes</taxon>
        <taxon>Eurotiomycetidae</taxon>
        <taxon>Eurotiales</taxon>
        <taxon>Aspergillaceae</taxon>
        <taxon>Aspergillus</taxon>
        <taxon>Aspergillus subgen. Nidulantes</taxon>
    </lineage>
</organism>
<evidence type="ECO:0000250" key="1">
    <source>
        <dbReference type="UniProtKB" id="P32775"/>
    </source>
</evidence>
<evidence type="ECO:0000250" key="2">
    <source>
        <dbReference type="UniProtKB" id="Q04446"/>
    </source>
</evidence>
<evidence type="ECO:0000250" key="3">
    <source>
        <dbReference type="UniProtKB" id="Q6FJV0"/>
    </source>
</evidence>
<evidence type="ECO:0000305" key="4"/>
<dbReference type="EC" id="2.4.1.18" evidence="2"/>
<dbReference type="EMBL" id="AB026630">
    <property type="protein sequence ID" value="BAA78714.1"/>
    <property type="status" value="ALT_SEQ"/>
    <property type="molecule type" value="mRNA"/>
</dbReference>
<dbReference type="EMBL" id="AACD01000038">
    <property type="protein sequence ID" value="EAA64425.1"/>
    <property type="status" value="ALT_SEQ"/>
    <property type="molecule type" value="Genomic_DNA"/>
</dbReference>
<dbReference type="EMBL" id="BN001307">
    <property type="protein sequence ID" value="CBF86590.1"/>
    <property type="molecule type" value="Genomic_DNA"/>
</dbReference>
<dbReference type="RefSeq" id="XP_659918.1">
    <property type="nucleotide sequence ID" value="XM_654826.1"/>
</dbReference>
<dbReference type="SMR" id="Q9Y8H3"/>
<dbReference type="FunCoup" id="Q9Y8H3">
    <property type="interactions" value="429"/>
</dbReference>
<dbReference type="STRING" id="227321.Q9Y8H3"/>
<dbReference type="CAZy" id="CBM48">
    <property type="family name" value="Carbohydrate-Binding Module Family 48"/>
</dbReference>
<dbReference type="CAZy" id="GH13">
    <property type="family name" value="Glycoside Hydrolase Family 13"/>
</dbReference>
<dbReference type="EnsemblFungi" id="CBF86590">
    <property type="protein sequence ID" value="CBF86590"/>
    <property type="gene ID" value="ANIA_02314"/>
</dbReference>
<dbReference type="VEuPathDB" id="FungiDB:AN2314"/>
<dbReference type="eggNOG" id="KOG0470">
    <property type="taxonomic scope" value="Eukaryota"/>
</dbReference>
<dbReference type="HOGENOM" id="CLU_011131_2_2_1"/>
<dbReference type="InParanoid" id="Q9Y8H3"/>
<dbReference type="OMA" id="YEMHLGS"/>
<dbReference type="OrthoDB" id="196493at2759"/>
<dbReference type="UniPathway" id="UPA00164"/>
<dbReference type="Proteomes" id="UP000000560">
    <property type="component" value="Chromosome VII"/>
</dbReference>
<dbReference type="GO" id="GO:0005737">
    <property type="term" value="C:cytoplasm"/>
    <property type="evidence" value="ECO:0000250"/>
    <property type="project" value="UniProtKB"/>
</dbReference>
<dbReference type="GO" id="GO:0003844">
    <property type="term" value="F:1,4-alpha-glucan branching enzyme activity"/>
    <property type="evidence" value="ECO:0000318"/>
    <property type="project" value="GO_Central"/>
</dbReference>
<dbReference type="GO" id="GO:0043169">
    <property type="term" value="F:cation binding"/>
    <property type="evidence" value="ECO:0007669"/>
    <property type="project" value="InterPro"/>
</dbReference>
<dbReference type="GO" id="GO:0004553">
    <property type="term" value="F:hydrolase activity, hydrolyzing O-glycosyl compounds"/>
    <property type="evidence" value="ECO:0007669"/>
    <property type="project" value="InterPro"/>
</dbReference>
<dbReference type="GO" id="GO:0005978">
    <property type="term" value="P:glycogen biosynthetic process"/>
    <property type="evidence" value="ECO:0000318"/>
    <property type="project" value="GO_Central"/>
</dbReference>
<dbReference type="CDD" id="cd11321">
    <property type="entry name" value="AmyAc_bac_euk_BE"/>
    <property type="match status" value="1"/>
</dbReference>
<dbReference type="CDD" id="cd02854">
    <property type="entry name" value="E_set_GBE_euk_N"/>
    <property type="match status" value="1"/>
</dbReference>
<dbReference type="FunFam" id="3.20.20.80:FF:000001">
    <property type="entry name" value="1,4-alpha-glucan branching enzyme"/>
    <property type="match status" value="1"/>
</dbReference>
<dbReference type="FunFam" id="2.60.40.10:FF:000250">
    <property type="entry name" value="1,4-alpha-glucan-branching enzyme, chloroplastic/amyloplastic"/>
    <property type="match status" value="1"/>
</dbReference>
<dbReference type="FunFam" id="2.60.40.1180:FF:000003">
    <property type="entry name" value="1,4-alpha-glucan-branching enzyme, chloroplastic/amyloplastic"/>
    <property type="match status" value="1"/>
</dbReference>
<dbReference type="Gene3D" id="3.20.20.80">
    <property type="entry name" value="Glycosidases"/>
    <property type="match status" value="1"/>
</dbReference>
<dbReference type="Gene3D" id="2.60.40.1180">
    <property type="entry name" value="Golgi alpha-mannosidase II"/>
    <property type="match status" value="1"/>
</dbReference>
<dbReference type="Gene3D" id="2.60.40.10">
    <property type="entry name" value="Immunoglobulins"/>
    <property type="match status" value="1"/>
</dbReference>
<dbReference type="InterPro" id="IPR006048">
    <property type="entry name" value="A-amylase/branching_C"/>
</dbReference>
<dbReference type="InterPro" id="IPR037439">
    <property type="entry name" value="Branching_enzy"/>
</dbReference>
<dbReference type="InterPro" id="IPR006047">
    <property type="entry name" value="Glyco_hydro_13_cat_dom"/>
</dbReference>
<dbReference type="InterPro" id="IPR004193">
    <property type="entry name" value="Glyco_hydro_13_N"/>
</dbReference>
<dbReference type="InterPro" id="IPR013780">
    <property type="entry name" value="Glyco_hydro_b"/>
</dbReference>
<dbReference type="InterPro" id="IPR017853">
    <property type="entry name" value="Glycoside_hydrolase_SF"/>
</dbReference>
<dbReference type="InterPro" id="IPR013783">
    <property type="entry name" value="Ig-like_fold"/>
</dbReference>
<dbReference type="InterPro" id="IPR014756">
    <property type="entry name" value="Ig_E-set"/>
</dbReference>
<dbReference type="PANTHER" id="PTHR43651">
    <property type="entry name" value="1,4-ALPHA-GLUCAN-BRANCHING ENZYME"/>
    <property type="match status" value="1"/>
</dbReference>
<dbReference type="PANTHER" id="PTHR43651:SF3">
    <property type="entry name" value="1,4-ALPHA-GLUCAN-BRANCHING ENZYME"/>
    <property type="match status" value="1"/>
</dbReference>
<dbReference type="Pfam" id="PF00128">
    <property type="entry name" value="Alpha-amylase"/>
    <property type="match status" value="1"/>
</dbReference>
<dbReference type="Pfam" id="PF02806">
    <property type="entry name" value="Alpha-amylase_C"/>
    <property type="match status" value="1"/>
</dbReference>
<dbReference type="Pfam" id="PF02922">
    <property type="entry name" value="CBM_48"/>
    <property type="match status" value="1"/>
</dbReference>
<dbReference type="PIRSF" id="PIRSF000463">
    <property type="entry name" value="GlgB"/>
    <property type="match status" value="1"/>
</dbReference>
<dbReference type="SMART" id="SM00642">
    <property type="entry name" value="Aamy"/>
    <property type="match status" value="1"/>
</dbReference>
<dbReference type="SUPFAM" id="SSF51445">
    <property type="entry name" value="(Trans)glycosidases"/>
    <property type="match status" value="1"/>
</dbReference>
<dbReference type="SUPFAM" id="SSF81296">
    <property type="entry name" value="E set domains"/>
    <property type="match status" value="1"/>
</dbReference>
<dbReference type="SUPFAM" id="SSF51011">
    <property type="entry name" value="Glycosyl hydrolase domain"/>
    <property type="match status" value="1"/>
</dbReference>